<protein>
    <recommendedName>
        <fullName evidence="1">Putative membrane protein insertion efficiency factor</fullName>
    </recommendedName>
</protein>
<organism>
    <name type="scientific">Prochlorococcus marinus (strain NATL1A)</name>
    <dbReference type="NCBI Taxonomy" id="167555"/>
    <lineage>
        <taxon>Bacteria</taxon>
        <taxon>Bacillati</taxon>
        <taxon>Cyanobacteriota</taxon>
        <taxon>Cyanophyceae</taxon>
        <taxon>Synechococcales</taxon>
        <taxon>Prochlorococcaceae</taxon>
        <taxon>Prochlorococcus</taxon>
    </lineage>
</organism>
<keyword id="KW-0997">Cell inner membrane</keyword>
<keyword id="KW-1003">Cell membrane</keyword>
<keyword id="KW-0472">Membrane</keyword>
<reference key="1">
    <citation type="journal article" date="2007" name="PLoS Genet.">
        <title>Patterns and implications of gene gain and loss in the evolution of Prochlorococcus.</title>
        <authorList>
            <person name="Kettler G.C."/>
            <person name="Martiny A.C."/>
            <person name="Huang K."/>
            <person name="Zucker J."/>
            <person name="Coleman M.L."/>
            <person name="Rodrigue S."/>
            <person name="Chen F."/>
            <person name="Lapidus A."/>
            <person name="Ferriera S."/>
            <person name="Johnson J."/>
            <person name="Steglich C."/>
            <person name="Church G.M."/>
            <person name="Richardson P."/>
            <person name="Chisholm S.W."/>
        </authorList>
    </citation>
    <scope>NUCLEOTIDE SEQUENCE [LARGE SCALE GENOMIC DNA]</scope>
    <source>
        <strain>NATL1A</strain>
    </source>
</reference>
<accession>A2C0L6</accession>
<comment type="function">
    <text evidence="1">Could be involved in insertion of integral membrane proteins into the membrane.</text>
</comment>
<comment type="subcellular location">
    <subcellularLocation>
        <location evidence="1">Cell inner membrane</location>
        <topology evidence="1">Peripheral membrane protein</topology>
        <orientation evidence="1">Cytoplasmic side</orientation>
    </subcellularLocation>
</comment>
<comment type="similarity">
    <text evidence="1">Belongs to the UPF0161 family.</text>
</comment>
<name>YIDD_PROM1</name>
<feature type="chain" id="PRO_1000013110" description="Putative membrane protein insertion efficiency factor">
    <location>
        <begin position="1"/>
        <end position="79"/>
    </location>
</feature>
<gene>
    <name type="ordered locus">NATL1_04621</name>
</gene>
<proteinExistence type="inferred from homology"/>
<dbReference type="EMBL" id="CP000553">
    <property type="protein sequence ID" value="ABM75026.1"/>
    <property type="molecule type" value="Genomic_DNA"/>
</dbReference>
<dbReference type="KEGG" id="pme:NATL1_04621"/>
<dbReference type="eggNOG" id="COG0759">
    <property type="taxonomic scope" value="Bacteria"/>
</dbReference>
<dbReference type="HOGENOM" id="CLU_144811_5_2_3"/>
<dbReference type="Proteomes" id="UP000002592">
    <property type="component" value="Chromosome"/>
</dbReference>
<dbReference type="GO" id="GO:0005886">
    <property type="term" value="C:plasma membrane"/>
    <property type="evidence" value="ECO:0007669"/>
    <property type="project" value="UniProtKB-SubCell"/>
</dbReference>
<dbReference type="HAMAP" id="MF_00386">
    <property type="entry name" value="UPF0161_YidD"/>
    <property type="match status" value="1"/>
</dbReference>
<dbReference type="InterPro" id="IPR002696">
    <property type="entry name" value="Membr_insert_effic_factor_YidD"/>
</dbReference>
<dbReference type="NCBIfam" id="TIGR00278">
    <property type="entry name" value="membrane protein insertion efficiency factor YidD"/>
    <property type="match status" value="1"/>
</dbReference>
<dbReference type="PANTHER" id="PTHR33383">
    <property type="entry name" value="MEMBRANE PROTEIN INSERTION EFFICIENCY FACTOR-RELATED"/>
    <property type="match status" value="1"/>
</dbReference>
<dbReference type="PANTHER" id="PTHR33383:SF1">
    <property type="entry name" value="MEMBRANE PROTEIN INSERTION EFFICIENCY FACTOR-RELATED"/>
    <property type="match status" value="1"/>
</dbReference>
<dbReference type="Pfam" id="PF01809">
    <property type="entry name" value="YidD"/>
    <property type="match status" value="1"/>
</dbReference>
<dbReference type="SMART" id="SM01234">
    <property type="entry name" value="Haemolytic"/>
    <property type="match status" value="1"/>
</dbReference>
<sequence>MLTKINKAIALVFVSLISFYQKWISPLFGPSCRFIPSCSAYGIEAVNKHGPWRGGWLTLKRLSKCHPFTPCGCDPVPEK</sequence>
<evidence type="ECO:0000255" key="1">
    <source>
        <dbReference type="HAMAP-Rule" id="MF_00386"/>
    </source>
</evidence>